<proteinExistence type="evidence at transcript level"/>
<sequence length="3660" mass="422881">MSAHVLWYEEVEDDYEREDVQKKTFTKWINAQFAKCGRRCIEDLFNDFRDGRKLLELLECLTGQKIAKEKGSTRVHALNNVNKALQILQRNNVDLVNIGSSDIVDGNHKLTLGLIWNIILHWQVKDVMKNIMAGLQQTNSEKILLSWVRQSTRNYPQVNVINFTSSWSDGLAFNALLHSHRPDLFDWNAVASQQSPVQRLDHAFNIARQHLGIEKLLDPEDVATACPDKKSILMYVTSLFQVLPQQVTMEAIREVEMLPRHSRVTTEEHIQVHHQQHFSQEITVNIPQRPSPSPKPRFKSYAYAQTAYVIPPDQKRRQVPPQFLETVEKRTYTTTVMRSEMDLDSYQTALEEVLTWLLSAEDALQAQGDISSDVEVVKEQFHTHEGFMMELTAHQGRVGNVLQVGSQLLAMGKLSDDEENEIQEQMNLLNSRWESLRVASMEKQSNLHKILMDLQNQQLAQLADWLTKTEERTKKIDSEPLGPDLEDLKRQVEEHKAFQDDLEQEQVKVNSLTHMVVVVDENSGDKATAALEEQLQHFGSRWAAICRWTEDRWVLLQDILRKWQHFAEEQCLFDAWLTEKEGSLSKIQTSDFKDENEMLTSLRKLAILKGDIEMKKQMMSKLKSLSRDLLVAVKNKAVAQKLESRLENFAQRWDSLVQKLESDSKQVSQAVTTTQTSLTQTTVMETVTMVTTREQILVKHAKEELPPPPPHKKRQLLVDSEIRKRFDSDTTELHSWMTRSEAVLQSPEFAIYRKEGNLSDLRERVNAIQREKPEKYRKLQDASRSAEALVEQMVNEGLNADNIRQASEQLKSRWIEFCQLLSERLVWLEYQNSIIDFYSQLQRLEQTAITAENWLKAQPTPATDPATVKIQLEKCKDEIIRMSTLQPQIERLKAQSQALKEKEQCPVFLDADLAAFTSHFKQILADMHTREKQLQTIFDSLPPARYKDTVTTILSWIQQSETKVSIPPVAVAEYEIMEQRLGELKALQSSLQEQQKGLKYLNTTVEDLSRKAPAEVSQKYRSEVELIVGRWKKLSSQLVEHCQKLEDLMTKLQRFQNDTKTLKKWMAEVDVFLKEEWPALGDSEALEKQLEQCTALVNDIQTIQPSLNSVNEIGKKMKREAEPEFASRIATELKDLNAQWEHICQQAHAKKAALKGGLDKTVSLRKDLSEMHEWITQAEEEYLERDFEYKTPEELQKAVEELKRAKEDAMQKEVKVKLITDSVNNFIAKAPPAANEALKKELDVLITSYQRLCSRLNGKCKTLEEVWACWHELLSYLDAENKWLNEVELKLKATENIQGGAEEISESLDSLERLMRHPEDNRNQIRELAQTLTDGGILDELINEKLEKFNTRWEELQQEAVRRQKSLEQSIQSAQETDKTLRLIQESLAAIDKQLTAYTADRVDAAQVPQEAQKIQSELTSHEISLEEMKKRNRGKESAKRVLSQIDVAQKKLQDVSMKFRLFQKPANFEQRLQECKRILDEVKLQVPKLETKSVEQEVVQSHLDHCMKLYKSLSEVKSEVETVIKTGRQIVQKQQTENPKELDERLTALKLQYNELGAKVTEKKQELEKCLKLSRKLRKEINSLTEWLAATDVELTKRSAVQGMPSNLDAEIAWGKATRKEIEKRQVQLKNICDLGENLKTVLKGKESLVEDKLSLLNSNWIAVTSRAEEWLNLLMEYQKHMEAFDQKVANVTTWIYRAEILLDESDKQKPQQKEETLKRLKAELNDMHPKVDSVRDQAVDLMTNRGDHCRKVIEPKLSELNHRFAAISQRIKSGKPFIPLKELEQFDFDIQKLLEPLEVEIQQGVNLKEEDFNKDMSEDDESTVKELLQRGDTLQKRITDERKREEIKIKQQLLQTKHNALKDLRSQRRKKALEISHQWYQYKRQADDLMTWLDDIEKKLASLPDHKDEQKLKEIGGELEKKKEDLNAVNRQAERLSKDGAAKAVEPTLVQLSKRWRDFESKFAQFRRLNYAQIQTVLEDTTFVMTESMTVETTYVPSTYLAEILQLLQALSEVEERLNSPVLQAKDCEDLLKQEECLKNIKDCLGRLQGHIDIIHSKKTPALQSATPRETANIQDKLTQLNSQWEKVNKMYRDRQARFDKSKEKWRLFHCEMKSFNEWLTETEEKLSRAQIEAGDVGHVKTKQFLQELQDGIGRQQTVVKTLNVTGEEIIEQSSAADANVLKEQLGNLNTRWQEICRQLVEKRKRIEEEKNILSEFQEDLNKLILWLEETENVIAIPLEPGNEDQLRDCLGKVKLRVEELLPHKGILKRLNETGGTTLGSASLNPERKHKLESTLKEASRRLLKVSRDLPEKQKEIEILLKDFIELNQQINQLTLWITPVKNQLELYNQVGQPGAFDIKETEAAVQAKQPNVEEVLSKGCHLYKEKPATHPVKKKLEDLNADWKAINHLILQLKEKPTFGEPALTSPGVLTSGQTVAVDTQARVTKETTSFTPEMPSSVLLEVPALADFNKAWAELTDWLSRLDREIKAQRVTVGDLDDINDMIIKQKANMQDLEQRRPQLDELITAAQNLKNKTSNQEARTIITDRIEKIQSQWDDVHGYLQNRRQQLHEMQKDSTQWLEAKQEAEQVLEQAKAKLESWKEISYTVEALKKQNSELKQFSKEIRQWQMNIEGVNDVALKPVRDYSADDTRKVELMTDNINATWATINKRVSEREAALESALLMLQEFYLDLEKFLAWLTEAETTANVLQDATHKEKTLEDPQMVRELMKQWQDLQAEIDAHTDIFHNLDENGQKILRSLEGSEDAVLLQRRLDNMNFRWSELRKKSLNIRSHLEASTDQWKRLHLSLQELLAWLQLKEDELKQQAPIGGDIPTVQKQNDVHRTFKRELKTKEPVIMNALETVRLFLADQPVEGLEKVYPEPRDLSPEERAQNVTKVLRRQADDVRTEWDKLNLRSADWQKKIDDALERLQGLQEAMDELDLKLRQAEAFKGSWQPVGDLLIDSLQDHLEKVKVYRAEMVPLKEKVHQVNELAHRFAPPDIQLSPYTLSCLEDLNTRWKVLQVAIDERIRQLHEAHRDFGPTSQHFLTTSVQGPWERAISPNKVPYYINHETQTTCWDHPKMTELYQSLADLNNVRFSAYRTAMKLRRLQKALCLDLLNLSAACDALDQHNLKQNDQPMDILQIINCLTTIYDRLEQEHNNLVNVPLCVDMCLNWLLNVYDTGRTGRIRVLSFKTGVVSLCKAHLEDKYRYLFKQVASSTGFCDQRRLGLLLHDSIQIPRQLGEVASFGGSNIEPSVRSCFQFANNKPEIEAALFLDWMRLEPQSMVWLPVLHRVAAAETAKHQAKCNICKECPIIGFRYRSLKHFNYDICQSCFFSGRVAKGHKMHYPMVEYCTPTTSGEDVRDFAKVLKNKFRTKRYFAKHPRMGYLPVQTVLEGDNMETPVTLINFWPVDSALAEMENSNGSYLNDSISPNESIDDEHLLIQHYCQSLNQESPLSQPRSPAQILISLESEERGELERILADLEEENRNLQAEYDRLKQQHDHKGLSPLPSPPEMMPVSPQSPRDAELIAEAKLLRQHKGRLEARMQILEDHNKQLESQLHRLRQLLEQPQADAKVNGTTLSSPSTSLQRSDSSQPMLLRVVGSQTSETMGEDDLLSPPQDTSTGLEEVMEQLNNSFPSSRGRNAPGKPVREATM</sequence>
<accession>P11533</accession>
<organism>
    <name type="scientific">Gallus gallus</name>
    <name type="common">Chicken</name>
    <dbReference type="NCBI Taxonomy" id="9031"/>
    <lineage>
        <taxon>Eukaryota</taxon>
        <taxon>Metazoa</taxon>
        <taxon>Chordata</taxon>
        <taxon>Craniata</taxon>
        <taxon>Vertebrata</taxon>
        <taxon>Euteleostomi</taxon>
        <taxon>Archelosauria</taxon>
        <taxon>Archosauria</taxon>
        <taxon>Dinosauria</taxon>
        <taxon>Saurischia</taxon>
        <taxon>Theropoda</taxon>
        <taxon>Coelurosauria</taxon>
        <taxon>Aves</taxon>
        <taxon>Neognathae</taxon>
        <taxon>Galloanserae</taxon>
        <taxon>Galliformes</taxon>
        <taxon>Phasianidae</taxon>
        <taxon>Phasianinae</taxon>
        <taxon>Gallus</taxon>
    </lineage>
</organism>
<keyword id="KW-0009">Actin-binding</keyword>
<keyword id="KW-0106">Calcium</keyword>
<keyword id="KW-1003">Cell membrane</keyword>
<keyword id="KW-0963">Cytoplasm</keyword>
<keyword id="KW-0206">Cytoskeleton</keyword>
<keyword id="KW-0472">Membrane</keyword>
<keyword id="KW-0479">Metal-binding</keyword>
<keyword id="KW-0628">Postsynaptic cell membrane</keyword>
<keyword id="KW-1185">Reference proteome</keyword>
<keyword id="KW-0677">Repeat</keyword>
<keyword id="KW-0770">Synapse</keyword>
<keyword id="KW-0862">Zinc</keyword>
<keyword id="KW-0863">Zinc-finger</keyword>
<dbReference type="EMBL" id="X13369">
    <property type="protein sequence ID" value="CAA31746.1"/>
    <property type="molecule type" value="mRNA"/>
</dbReference>
<dbReference type="PIR" id="S02041">
    <property type="entry name" value="S02041"/>
</dbReference>
<dbReference type="RefSeq" id="NP_990630.2">
    <property type="nucleotide sequence ID" value="NM_205299.2"/>
</dbReference>
<dbReference type="SMR" id="P11533"/>
<dbReference type="FunCoup" id="P11533">
    <property type="interactions" value="66"/>
</dbReference>
<dbReference type="STRING" id="9031.ENSGALP00000071548"/>
<dbReference type="GlyGen" id="P11533">
    <property type="glycosylation" value="2 sites"/>
</dbReference>
<dbReference type="PaxDb" id="9031-ENSGALP00000026200"/>
<dbReference type="GeneID" id="396236"/>
<dbReference type="KEGG" id="gga:396236"/>
<dbReference type="CTD" id="1756"/>
<dbReference type="VEuPathDB" id="HostDB:geneid_396236"/>
<dbReference type="eggNOG" id="KOG4286">
    <property type="taxonomic scope" value="Eukaryota"/>
</dbReference>
<dbReference type="InParanoid" id="P11533"/>
<dbReference type="OrthoDB" id="10057795at2759"/>
<dbReference type="PhylomeDB" id="P11533"/>
<dbReference type="PRO" id="PR:P11533"/>
<dbReference type="Proteomes" id="UP000000539">
    <property type="component" value="Unassembled WGS sequence"/>
</dbReference>
<dbReference type="GO" id="GO:0005737">
    <property type="term" value="C:cytoplasm"/>
    <property type="evidence" value="ECO:0007669"/>
    <property type="project" value="UniProtKB-KW"/>
</dbReference>
<dbReference type="GO" id="GO:0005856">
    <property type="term" value="C:cytoskeleton"/>
    <property type="evidence" value="ECO:0007669"/>
    <property type="project" value="UniProtKB-SubCell"/>
</dbReference>
<dbReference type="GO" id="GO:0016010">
    <property type="term" value="C:dystrophin-associated glycoprotein complex"/>
    <property type="evidence" value="ECO:0007669"/>
    <property type="project" value="UniProtKB-ARBA"/>
</dbReference>
<dbReference type="GO" id="GO:0120025">
    <property type="term" value="C:plasma membrane bounded cell projection"/>
    <property type="evidence" value="ECO:0007669"/>
    <property type="project" value="UniProtKB-ARBA"/>
</dbReference>
<dbReference type="GO" id="GO:0045211">
    <property type="term" value="C:postsynaptic membrane"/>
    <property type="evidence" value="ECO:0007669"/>
    <property type="project" value="UniProtKB-SubCell"/>
</dbReference>
<dbReference type="GO" id="GO:0042383">
    <property type="term" value="C:sarcolemma"/>
    <property type="evidence" value="ECO:0000318"/>
    <property type="project" value="GO_Central"/>
</dbReference>
<dbReference type="GO" id="GO:0003779">
    <property type="term" value="F:actin binding"/>
    <property type="evidence" value="ECO:0007669"/>
    <property type="project" value="UniProtKB-KW"/>
</dbReference>
<dbReference type="GO" id="GO:0008270">
    <property type="term" value="F:zinc ion binding"/>
    <property type="evidence" value="ECO:0007669"/>
    <property type="project" value="UniProtKB-KW"/>
</dbReference>
<dbReference type="GO" id="GO:0055001">
    <property type="term" value="P:muscle cell development"/>
    <property type="evidence" value="ECO:0000318"/>
    <property type="project" value="GO_Central"/>
</dbReference>
<dbReference type="GO" id="GO:0048666">
    <property type="term" value="P:neuron development"/>
    <property type="evidence" value="ECO:0000318"/>
    <property type="project" value="GO_Central"/>
</dbReference>
<dbReference type="GO" id="GO:0090257">
    <property type="term" value="P:regulation of muscle system process"/>
    <property type="evidence" value="ECO:0000318"/>
    <property type="project" value="GO_Central"/>
</dbReference>
<dbReference type="GO" id="GO:0007519">
    <property type="term" value="P:skeletal muscle tissue development"/>
    <property type="evidence" value="ECO:0000318"/>
    <property type="project" value="GO_Central"/>
</dbReference>
<dbReference type="GO" id="GO:0099536">
    <property type="term" value="P:synaptic signaling"/>
    <property type="evidence" value="ECO:0000318"/>
    <property type="project" value="GO_Central"/>
</dbReference>
<dbReference type="CDD" id="cd21231">
    <property type="entry name" value="CH_DMD_rpt1"/>
    <property type="match status" value="1"/>
</dbReference>
<dbReference type="CDD" id="cd21233">
    <property type="entry name" value="CH_DMD_rpt2"/>
    <property type="match status" value="1"/>
</dbReference>
<dbReference type="CDD" id="cd16246">
    <property type="entry name" value="EFh_DMD"/>
    <property type="match status" value="1"/>
</dbReference>
<dbReference type="CDD" id="cd00176">
    <property type="entry name" value="SPEC"/>
    <property type="match status" value="14"/>
</dbReference>
<dbReference type="CDD" id="cd00201">
    <property type="entry name" value="WW"/>
    <property type="match status" value="1"/>
</dbReference>
<dbReference type="CDD" id="cd02334">
    <property type="entry name" value="ZZ_dystrophin"/>
    <property type="match status" value="1"/>
</dbReference>
<dbReference type="FunFam" id="1.20.58.60:FF:000118">
    <property type="entry name" value="Dystrophin"/>
    <property type="match status" value="1"/>
</dbReference>
<dbReference type="FunFam" id="1.10.238.10:FF:000008">
    <property type="entry name" value="Dystrophin isoform 2"/>
    <property type="match status" value="1"/>
</dbReference>
<dbReference type="FunFam" id="3.30.60.90:FF:000001">
    <property type="entry name" value="Dystrophin isoform 2"/>
    <property type="match status" value="1"/>
</dbReference>
<dbReference type="FunFam" id="1.10.238.10:FF:000023">
    <property type="entry name" value="dystrophin isoform X1"/>
    <property type="match status" value="1"/>
</dbReference>
<dbReference type="FunFam" id="1.20.58.60:FF:000140">
    <property type="entry name" value="dystrophin isoform X1"/>
    <property type="match status" value="1"/>
</dbReference>
<dbReference type="FunFam" id="2.20.70.10:FF:000004">
    <property type="entry name" value="dystrophin isoform X1"/>
    <property type="match status" value="1"/>
</dbReference>
<dbReference type="FunFam" id="1.20.58.60:FF:000091">
    <property type="entry name" value="dystrophin isoform X2"/>
    <property type="match status" value="1"/>
</dbReference>
<dbReference type="FunFam" id="1.20.58.60:FF:000146">
    <property type="entry name" value="dystrophin isoform X2"/>
    <property type="match status" value="1"/>
</dbReference>
<dbReference type="FunFam" id="1.10.418.10:FF:000032">
    <property type="entry name" value="utrophin isoform X1"/>
    <property type="match status" value="1"/>
</dbReference>
<dbReference type="FunFam" id="1.20.58.60:FF:000056">
    <property type="entry name" value="utrophin isoform X1"/>
    <property type="match status" value="1"/>
</dbReference>
<dbReference type="FunFam" id="1.20.58.60:FF:000070">
    <property type="entry name" value="utrophin isoform X1"/>
    <property type="match status" value="1"/>
</dbReference>
<dbReference type="FunFam" id="1.20.58.60:FF:000075">
    <property type="entry name" value="utrophin isoform X1"/>
    <property type="match status" value="1"/>
</dbReference>
<dbReference type="FunFam" id="1.10.418.10:FF:000044">
    <property type="entry name" value="utrophin isoform X2"/>
    <property type="match status" value="1"/>
</dbReference>
<dbReference type="FunFam" id="1.20.58.60:FF:000102">
    <property type="entry name" value="utrophin isoform X2"/>
    <property type="match status" value="1"/>
</dbReference>
<dbReference type="Gene3D" id="1.20.58.60">
    <property type="match status" value="16"/>
</dbReference>
<dbReference type="Gene3D" id="2.20.70.10">
    <property type="match status" value="1"/>
</dbReference>
<dbReference type="Gene3D" id="3.30.60.90">
    <property type="match status" value="1"/>
</dbReference>
<dbReference type="Gene3D" id="1.10.418.10">
    <property type="entry name" value="Calponin-like domain"/>
    <property type="match status" value="2"/>
</dbReference>
<dbReference type="Gene3D" id="1.10.238.10">
    <property type="entry name" value="EF-hand"/>
    <property type="match status" value="2"/>
</dbReference>
<dbReference type="InterPro" id="IPR001589">
    <property type="entry name" value="Actinin_actin-bd_CS"/>
</dbReference>
<dbReference type="InterPro" id="IPR001715">
    <property type="entry name" value="CH_dom"/>
</dbReference>
<dbReference type="InterPro" id="IPR036872">
    <property type="entry name" value="CH_dom_sf"/>
</dbReference>
<dbReference type="InterPro" id="IPR035436">
    <property type="entry name" value="Dystrophin/utrophin"/>
</dbReference>
<dbReference type="InterPro" id="IPR011992">
    <property type="entry name" value="EF-hand-dom_pair"/>
</dbReference>
<dbReference type="InterPro" id="IPR015153">
    <property type="entry name" value="EF-hand_dom_typ1"/>
</dbReference>
<dbReference type="InterPro" id="IPR015154">
    <property type="entry name" value="EF-hand_dom_typ2"/>
</dbReference>
<dbReference type="InterPro" id="IPR050774">
    <property type="entry name" value="KCMF1/Dystrophin"/>
</dbReference>
<dbReference type="InterPro" id="IPR018159">
    <property type="entry name" value="Spectrin/alpha-actinin"/>
</dbReference>
<dbReference type="InterPro" id="IPR002017">
    <property type="entry name" value="Spectrin_repeat"/>
</dbReference>
<dbReference type="InterPro" id="IPR001202">
    <property type="entry name" value="WW_dom"/>
</dbReference>
<dbReference type="InterPro" id="IPR036020">
    <property type="entry name" value="WW_dom_sf"/>
</dbReference>
<dbReference type="InterPro" id="IPR000433">
    <property type="entry name" value="Znf_ZZ"/>
</dbReference>
<dbReference type="InterPro" id="IPR043145">
    <property type="entry name" value="Znf_ZZ_sf"/>
</dbReference>
<dbReference type="PANTHER" id="PTHR12268:SF14">
    <property type="entry name" value="DYSTROPHIN-1"/>
    <property type="match status" value="1"/>
</dbReference>
<dbReference type="PANTHER" id="PTHR12268">
    <property type="entry name" value="E3 UBIQUITIN-PROTEIN LIGASE KCMF1"/>
    <property type="match status" value="1"/>
</dbReference>
<dbReference type="Pfam" id="PF00307">
    <property type="entry name" value="CH"/>
    <property type="match status" value="2"/>
</dbReference>
<dbReference type="Pfam" id="PF09068">
    <property type="entry name" value="EF-hand_2"/>
    <property type="match status" value="1"/>
</dbReference>
<dbReference type="Pfam" id="PF09069">
    <property type="entry name" value="EF-hand_3"/>
    <property type="match status" value="1"/>
</dbReference>
<dbReference type="Pfam" id="PF00435">
    <property type="entry name" value="Spectrin"/>
    <property type="match status" value="17"/>
</dbReference>
<dbReference type="Pfam" id="PF00397">
    <property type="entry name" value="WW"/>
    <property type="match status" value="1"/>
</dbReference>
<dbReference type="Pfam" id="PF00569">
    <property type="entry name" value="ZZ"/>
    <property type="match status" value="1"/>
</dbReference>
<dbReference type="PIRSF" id="PIRSF002341">
    <property type="entry name" value="Dystrophin/utrophin"/>
    <property type="match status" value="1"/>
</dbReference>
<dbReference type="SMART" id="SM00033">
    <property type="entry name" value="CH"/>
    <property type="match status" value="2"/>
</dbReference>
<dbReference type="SMART" id="SM00150">
    <property type="entry name" value="SPEC"/>
    <property type="match status" value="21"/>
</dbReference>
<dbReference type="SMART" id="SM00456">
    <property type="entry name" value="WW"/>
    <property type="match status" value="1"/>
</dbReference>
<dbReference type="SMART" id="SM00291">
    <property type="entry name" value="ZnF_ZZ"/>
    <property type="match status" value="1"/>
</dbReference>
<dbReference type="SUPFAM" id="SSF47576">
    <property type="entry name" value="Calponin-homology domain, CH-domain"/>
    <property type="match status" value="1"/>
</dbReference>
<dbReference type="SUPFAM" id="SSF47473">
    <property type="entry name" value="EF-hand"/>
    <property type="match status" value="2"/>
</dbReference>
<dbReference type="SUPFAM" id="SSF57850">
    <property type="entry name" value="RING/U-box"/>
    <property type="match status" value="1"/>
</dbReference>
<dbReference type="SUPFAM" id="SSF46966">
    <property type="entry name" value="Spectrin repeat"/>
    <property type="match status" value="19"/>
</dbReference>
<dbReference type="SUPFAM" id="SSF51045">
    <property type="entry name" value="WW domain"/>
    <property type="match status" value="1"/>
</dbReference>
<dbReference type="PROSITE" id="PS00019">
    <property type="entry name" value="ACTININ_1"/>
    <property type="match status" value="1"/>
</dbReference>
<dbReference type="PROSITE" id="PS00020">
    <property type="entry name" value="ACTININ_2"/>
    <property type="match status" value="1"/>
</dbReference>
<dbReference type="PROSITE" id="PS50021">
    <property type="entry name" value="CH"/>
    <property type="match status" value="2"/>
</dbReference>
<dbReference type="PROSITE" id="PS01159">
    <property type="entry name" value="WW_DOMAIN_1"/>
    <property type="match status" value="1"/>
</dbReference>
<dbReference type="PROSITE" id="PS50020">
    <property type="entry name" value="WW_DOMAIN_2"/>
    <property type="match status" value="1"/>
</dbReference>
<dbReference type="PROSITE" id="PS01357">
    <property type="entry name" value="ZF_ZZ_1"/>
    <property type="match status" value="1"/>
</dbReference>
<dbReference type="PROSITE" id="PS50135">
    <property type="entry name" value="ZF_ZZ_2"/>
    <property type="match status" value="1"/>
</dbReference>
<comment type="function">
    <text>May play a role in anchoring the cytoskeleton to the plasma membrane.</text>
</comment>
<comment type="subcellular location">
    <subcellularLocation>
        <location>Cell membrane</location>
        <location>Sarcolemma</location>
        <topology>Peripheral membrane protein</topology>
        <orientation>Cytoplasmic side</orientation>
    </subcellularLocation>
    <subcellularLocation>
        <location>Cytoplasm</location>
        <location>Cytoskeleton</location>
    </subcellularLocation>
    <subcellularLocation>
        <location evidence="1">Postsynaptic cell membrane</location>
    </subcellularLocation>
    <text evidence="1">Localizes to neuromuscular junctions.</text>
</comment>
<feature type="chain" id="PRO_0000076078" description="Dystrophin">
    <location>
        <begin position="1"/>
        <end position="3660"/>
    </location>
</feature>
<feature type="domain" description="Calponin-homology (CH) 1" evidence="2">
    <location>
        <begin position="19"/>
        <end position="123"/>
    </location>
</feature>
<feature type="domain" description="Calponin-homology (CH) 2" evidence="2">
    <location>
        <begin position="138"/>
        <end position="244"/>
    </location>
</feature>
<feature type="repeat" description="Spectrin 1">
    <location>
        <begin position="341"/>
        <end position="449"/>
    </location>
</feature>
<feature type="repeat" description="Spectrin 2">
    <location>
        <begin position="450"/>
        <end position="558"/>
    </location>
</feature>
<feature type="repeat" description="Spectrin 3">
    <location>
        <begin position="561"/>
        <end position="669"/>
    </location>
</feature>
<feature type="repeat" description="Spectrin 4">
    <location>
        <begin position="721"/>
        <end position="830"/>
    </location>
</feature>
<feature type="repeat" description="Spectrin 5">
    <location>
        <begin position="832"/>
        <end position="936"/>
    </location>
</feature>
<feature type="repeat" description="Spectrin 6">
    <location>
        <begin position="945"/>
        <end position="1047"/>
    </location>
</feature>
<feature type="repeat" description="Spectrin 7">
    <location>
        <begin position="1050"/>
        <end position="1156"/>
    </location>
</feature>
<feature type="repeat" description="Spectrin 8">
    <location>
        <begin position="1159"/>
        <end position="1265"/>
    </location>
</feature>
<feature type="repeat" description="Spectrin 9">
    <location>
        <begin position="1268"/>
        <end position="1369"/>
    </location>
</feature>
<feature type="repeat" description="Spectrin 10">
    <location>
        <begin position="1470"/>
        <end position="1570"/>
    </location>
</feature>
<feature type="repeat" description="Spectrin 11">
    <location>
        <begin position="1573"/>
        <end position="1678"/>
    </location>
</feature>
<feature type="repeat" description="Spectrin 12">
    <location>
        <begin position="1681"/>
        <end position="1782"/>
    </location>
</feature>
<feature type="repeat" description="Spectrin 13">
    <location>
        <begin position="1879"/>
        <end position="1981"/>
    </location>
</feature>
<feature type="repeat" description="Spectrin 14">
    <location>
        <begin position="2013"/>
        <end position="2103"/>
    </location>
</feature>
<feature type="repeat" description="Spectrin 15">
    <location>
        <begin position="2106"/>
        <end position="2211"/>
    </location>
</feature>
<feature type="repeat" description="Spectrin 16">
    <location>
        <begin position="2214"/>
        <end position="2321"/>
    </location>
</feature>
<feature type="repeat" description="Spectrin 17">
    <location>
        <begin position="2472"/>
        <end position="2574"/>
    </location>
</feature>
<feature type="repeat" description="Spectrin 18">
    <location>
        <begin position="2577"/>
        <end position="2683"/>
    </location>
</feature>
<feature type="repeat" description="Spectrin 19">
    <location>
        <begin position="2686"/>
        <end position="2799"/>
    </location>
</feature>
<feature type="repeat" description="Spectrin 20">
    <location>
        <begin position="2802"/>
        <end position="2904"/>
    </location>
</feature>
<feature type="repeat" description="Spectrin 21">
    <location>
        <begin position="2906"/>
        <end position="2928"/>
    </location>
</feature>
<feature type="repeat" description="Spectrin 22">
    <location>
        <begin position="2931"/>
        <end position="3037"/>
    </location>
</feature>
<feature type="domain" description="WW" evidence="3">
    <location>
        <begin position="3052"/>
        <end position="3085"/>
    </location>
</feature>
<feature type="zinc finger region" description="ZZ-type; degenerate" evidence="4">
    <location>
        <begin position="3305"/>
        <end position="3361"/>
    </location>
</feature>
<feature type="region of interest" description="Actin-binding">
    <location>
        <begin position="1"/>
        <end position="244"/>
    </location>
</feature>
<feature type="region of interest" description="Disordered" evidence="5">
    <location>
        <begin position="3503"/>
        <end position="3526"/>
    </location>
</feature>
<feature type="region of interest" description="Disordered" evidence="5">
    <location>
        <begin position="3575"/>
        <end position="3660"/>
    </location>
</feature>
<feature type="compositionally biased region" description="Polar residues" evidence="5">
    <location>
        <begin position="3582"/>
        <end position="3601"/>
    </location>
</feature>
<feature type="compositionally biased region" description="Polar residues" evidence="5">
    <location>
        <begin position="3637"/>
        <end position="3647"/>
    </location>
</feature>
<feature type="binding site" evidence="4">
    <location>
        <position position="3310"/>
    </location>
    <ligand>
        <name>Zn(2+)</name>
        <dbReference type="ChEBI" id="CHEBI:29105"/>
    </ligand>
</feature>
<feature type="binding site" evidence="4">
    <location>
        <position position="3313"/>
    </location>
    <ligand>
        <name>Zn(2+)</name>
        <dbReference type="ChEBI" id="CHEBI:29105"/>
    </ligand>
</feature>
<feature type="binding site" evidence="4">
    <location>
        <position position="3334"/>
    </location>
    <ligand>
        <name>Zn(2+)</name>
        <dbReference type="ChEBI" id="CHEBI:29105"/>
    </ligand>
</feature>
<feature type="binding site" evidence="4">
    <location>
        <position position="3337"/>
    </location>
    <ligand>
        <name>Zn(2+)</name>
        <dbReference type="ChEBI" id="CHEBI:29105"/>
    </ligand>
</feature>
<feature type="sequence variant">
    <location>
        <position position="1171"/>
    </location>
</feature>
<feature type="sequence variant">
    <original>Q</original>
    <variation>H</variation>
    <location>
        <position position="1869"/>
    </location>
</feature>
<feature type="sequence variant">
    <original>K</original>
    <variation>R</variation>
    <location>
        <position position="1885"/>
    </location>
</feature>
<evidence type="ECO:0000250" key="1"/>
<evidence type="ECO:0000255" key="2">
    <source>
        <dbReference type="PROSITE-ProRule" id="PRU00044"/>
    </source>
</evidence>
<evidence type="ECO:0000255" key="3">
    <source>
        <dbReference type="PROSITE-ProRule" id="PRU00224"/>
    </source>
</evidence>
<evidence type="ECO:0000255" key="4">
    <source>
        <dbReference type="PROSITE-ProRule" id="PRU00228"/>
    </source>
</evidence>
<evidence type="ECO:0000256" key="5">
    <source>
        <dbReference type="SAM" id="MobiDB-lite"/>
    </source>
</evidence>
<reference key="1">
    <citation type="journal article" date="1988" name="Nucleic Acids Res.">
        <title>Nucleotide sequence of chicken dystrophin cDNA.</title>
        <authorList>
            <person name="Lemaire C."/>
            <person name="Heilig R."/>
            <person name="Mandel J.-L."/>
        </authorList>
    </citation>
    <scope>NUCLEOTIDE SEQUENCE [MRNA]</scope>
</reference>
<reference key="2">
    <citation type="journal article" date="1988" name="EMBO J.">
        <title>The chicken dystrophin cDNA: striking conservation of the C-terminal coding and 3' untranslated regions between man and chicken.</title>
        <authorList>
            <person name="Lemaire C."/>
            <person name="Heilig R."/>
            <person name="Mandel J.L."/>
        </authorList>
    </citation>
    <scope>NUCLEOTIDE SEQUENCE [MRNA]</scope>
    <source>
        <tissue>Muscle</tissue>
    </source>
</reference>
<name>DMD_CHICK</name>
<protein>
    <recommendedName>
        <fullName>Dystrophin</fullName>
    </recommendedName>
</protein>
<gene>
    <name type="primary">DMD</name>
</gene>